<evidence type="ECO:0000255" key="1">
    <source>
        <dbReference type="HAMAP-Rule" id="MF_01021"/>
    </source>
</evidence>
<accession>Q3J6Q0</accession>
<gene>
    <name evidence="1" type="primary">hisI</name>
    <name type="ordered locus">Noc_3055</name>
</gene>
<keyword id="KW-0028">Amino-acid biosynthesis</keyword>
<keyword id="KW-0963">Cytoplasm</keyword>
<keyword id="KW-0368">Histidine biosynthesis</keyword>
<keyword id="KW-0378">Hydrolase</keyword>
<keyword id="KW-0460">Magnesium</keyword>
<keyword id="KW-0479">Metal-binding</keyword>
<keyword id="KW-1185">Reference proteome</keyword>
<keyword id="KW-0862">Zinc</keyword>
<sequence>MSLGWLEDVAWNKEGLIPAIAQEDRTGQVLMLAWMNREALETTVQSGYAVYWSRSRKRLWRKGEQSGHEQIIKAIHLDCDSDAVLLLVEQKGGMACHTGRHRCFFKRLEKGNWASVEPVLKSPDSIYNNSDE</sequence>
<organism>
    <name type="scientific">Nitrosococcus oceani (strain ATCC 19707 / BCRC 17464 / JCM 30415 / NCIMB 11848 / C-107)</name>
    <dbReference type="NCBI Taxonomy" id="323261"/>
    <lineage>
        <taxon>Bacteria</taxon>
        <taxon>Pseudomonadati</taxon>
        <taxon>Pseudomonadota</taxon>
        <taxon>Gammaproteobacteria</taxon>
        <taxon>Chromatiales</taxon>
        <taxon>Chromatiaceae</taxon>
        <taxon>Nitrosococcus</taxon>
    </lineage>
</organism>
<proteinExistence type="inferred from homology"/>
<comment type="function">
    <text evidence="1">Catalyzes the hydrolysis of the adenine ring of phosphoribosyl-AMP.</text>
</comment>
<comment type="catalytic activity">
    <reaction evidence="1">
        <text>1-(5-phospho-beta-D-ribosyl)-5'-AMP + H2O = 1-(5-phospho-beta-D-ribosyl)-5-[(5-phospho-beta-D-ribosylamino)methylideneamino]imidazole-4-carboxamide</text>
        <dbReference type="Rhea" id="RHEA:20049"/>
        <dbReference type="ChEBI" id="CHEBI:15377"/>
        <dbReference type="ChEBI" id="CHEBI:58435"/>
        <dbReference type="ChEBI" id="CHEBI:59457"/>
        <dbReference type="EC" id="3.5.4.19"/>
    </reaction>
</comment>
<comment type="cofactor">
    <cofactor evidence="1">
        <name>Mg(2+)</name>
        <dbReference type="ChEBI" id="CHEBI:18420"/>
    </cofactor>
    <text evidence="1">Binds 1 Mg(2+) ion per subunit.</text>
</comment>
<comment type="cofactor">
    <cofactor evidence="1">
        <name>Zn(2+)</name>
        <dbReference type="ChEBI" id="CHEBI:29105"/>
    </cofactor>
    <text evidence="1">Binds 1 zinc ion per subunit.</text>
</comment>
<comment type="pathway">
    <text evidence="1">Amino-acid biosynthesis; L-histidine biosynthesis; L-histidine from 5-phospho-alpha-D-ribose 1-diphosphate: step 3/9.</text>
</comment>
<comment type="subunit">
    <text evidence="1">Homodimer.</text>
</comment>
<comment type="subcellular location">
    <subcellularLocation>
        <location evidence="1">Cytoplasm</location>
    </subcellularLocation>
</comment>
<comment type="similarity">
    <text evidence="1">Belongs to the PRA-CH family.</text>
</comment>
<feature type="chain" id="PRO_0000229828" description="Phosphoribosyl-AMP cyclohydrolase">
    <location>
        <begin position="1"/>
        <end position="132"/>
    </location>
</feature>
<feature type="binding site" evidence="1">
    <location>
        <position position="78"/>
    </location>
    <ligand>
        <name>Mg(2+)</name>
        <dbReference type="ChEBI" id="CHEBI:18420"/>
    </ligand>
</feature>
<feature type="binding site" evidence="1">
    <location>
        <position position="79"/>
    </location>
    <ligand>
        <name>Zn(2+)</name>
        <dbReference type="ChEBI" id="CHEBI:29105"/>
        <note>ligand shared between dimeric partners</note>
    </ligand>
</feature>
<feature type="binding site" evidence="1">
    <location>
        <position position="80"/>
    </location>
    <ligand>
        <name>Mg(2+)</name>
        <dbReference type="ChEBI" id="CHEBI:18420"/>
    </ligand>
</feature>
<feature type="binding site" evidence="1">
    <location>
        <position position="82"/>
    </location>
    <ligand>
        <name>Mg(2+)</name>
        <dbReference type="ChEBI" id="CHEBI:18420"/>
    </ligand>
</feature>
<feature type="binding site" evidence="1">
    <location>
        <position position="96"/>
    </location>
    <ligand>
        <name>Zn(2+)</name>
        <dbReference type="ChEBI" id="CHEBI:29105"/>
        <note>ligand shared between dimeric partners</note>
    </ligand>
</feature>
<feature type="binding site" evidence="1">
    <location>
        <position position="103"/>
    </location>
    <ligand>
        <name>Zn(2+)</name>
        <dbReference type="ChEBI" id="CHEBI:29105"/>
        <note>ligand shared between dimeric partners</note>
    </ligand>
</feature>
<dbReference type="EC" id="3.5.4.19" evidence="1"/>
<dbReference type="EMBL" id="CP000127">
    <property type="protein sequence ID" value="ABA59496.1"/>
    <property type="molecule type" value="Genomic_DNA"/>
</dbReference>
<dbReference type="RefSeq" id="WP_002813230.1">
    <property type="nucleotide sequence ID" value="NC_007484.1"/>
</dbReference>
<dbReference type="SMR" id="Q3J6Q0"/>
<dbReference type="STRING" id="323261.Noc_3055"/>
<dbReference type="KEGG" id="noc:Noc_3055"/>
<dbReference type="eggNOG" id="COG0139">
    <property type="taxonomic scope" value="Bacteria"/>
</dbReference>
<dbReference type="HOGENOM" id="CLU_048577_5_0_6"/>
<dbReference type="InParanoid" id="Q3J6Q0"/>
<dbReference type="UniPathway" id="UPA00031">
    <property type="reaction ID" value="UER00008"/>
</dbReference>
<dbReference type="Proteomes" id="UP000006838">
    <property type="component" value="Chromosome"/>
</dbReference>
<dbReference type="GO" id="GO:0005737">
    <property type="term" value="C:cytoplasm"/>
    <property type="evidence" value="ECO:0007669"/>
    <property type="project" value="UniProtKB-SubCell"/>
</dbReference>
<dbReference type="GO" id="GO:0000287">
    <property type="term" value="F:magnesium ion binding"/>
    <property type="evidence" value="ECO:0007669"/>
    <property type="project" value="UniProtKB-UniRule"/>
</dbReference>
<dbReference type="GO" id="GO:0004635">
    <property type="term" value="F:phosphoribosyl-AMP cyclohydrolase activity"/>
    <property type="evidence" value="ECO:0007669"/>
    <property type="project" value="UniProtKB-UniRule"/>
</dbReference>
<dbReference type="GO" id="GO:0008270">
    <property type="term" value="F:zinc ion binding"/>
    <property type="evidence" value="ECO:0007669"/>
    <property type="project" value="UniProtKB-UniRule"/>
</dbReference>
<dbReference type="GO" id="GO:0000105">
    <property type="term" value="P:L-histidine biosynthetic process"/>
    <property type="evidence" value="ECO:0007669"/>
    <property type="project" value="UniProtKB-UniRule"/>
</dbReference>
<dbReference type="FunFam" id="3.10.20.810:FF:000001">
    <property type="entry name" value="Histidine biosynthesis bifunctional protein HisIE"/>
    <property type="match status" value="1"/>
</dbReference>
<dbReference type="Gene3D" id="3.10.20.810">
    <property type="entry name" value="Phosphoribosyl-AMP cyclohydrolase"/>
    <property type="match status" value="1"/>
</dbReference>
<dbReference type="HAMAP" id="MF_01021">
    <property type="entry name" value="HisI"/>
    <property type="match status" value="1"/>
</dbReference>
<dbReference type="InterPro" id="IPR026660">
    <property type="entry name" value="PRA-CH"/>
</dbReference>
<dbReference type="InterPro" id="IPR002496">
    <property type="entry name" value="PRib_AMP_CycHydrolase_dom"/>
</dbReference>
<dbReference type="InterPro" id="IPR038019">
    <property type="entry name" value="PRib_AMP_CycHydrolase_sf"/>
</dbReference>
<dbReference type="NCBIfam" id="NF000768">
    <property type="entry name" value="PRK00051.1"/>
    <property type="match status" value="1"/>
</dbReference>
<dbReference type="PANTHER" id="PTHR42945">
    <property type="entry name" value="HISTIDINE BIOSYNTHESIS BIFUNCTIONAL PROTEIN"/>
    <property type="match status" value="1"/>
</dbReference>
<dbReference type="PANTHER" id="PTHR42945:SF1">
    <property type="entry name" value="HISTIDINE BIOSYNTHESIS BIFUNCTIONAL PROTEIN HIS7"/>
    <property type="match status" value="1"/>
</dbReference>
<dbReference type="Pfam" id="PF01502">
    <property type="entry name" value="PRA-CH"/>
    <property type="match status" value="1"/>
</dbReference>
<dbReference type="SUPFAM" id="SSF141734">
    <property type="entry name" value="HisI-like"/>
    <property type="match status" value="1"/>
</dbReference>
<protein>
    <recommendedName>
        <fullName evidence="1">Phosphoribosyl-AMP cyclohydrolase</fullName>
        <shortName evidence="1">PRA-CH</shortName>
        <ecNumber evidence="1">3.5.4.19</ecNumber>
    </recommendedName>
</protein>
<reference key="1">
    <citation type="journal article" date="2006" name="Appl. Environ. Microbiol.">
        <title>Complete genome sequence of the marine, chemolithoautotrophic, ammonia-oxidizing bacterium Nitrosococcus oceani ATCC 19707.</title>
        <authorList>
            <person name="Klotz M.G."/>
            <person name="Arp D.J."/>
            <person name="Chain P.S.G."/>
            <person name="El-Sheikh A.F."/>
            <person name="Hauser L.J."/>
            <person name="Hommes N.G."/>
            <person name="Larimer F.W."/>
            <person name="Malfatti S.A."/>
            <person name="Norton J.M."/>
            <person name="Poret-Peterson A.T."/>
            <person name="Vergez L.M."/>
            <person name="Ward B.B."/>
        </authorList>
    </citation>
    <scope>NUCLEOTIDE SEQUENCE [LARGE SCALE GENOMIC DNA]</scope>
    <source>
        <strain>ATCC 19707 / BCRC 17464 / JCM 30415 / NCIMB 11848 / C-107</strain>
    </source>
</reference>
<name>HIS3_NITOC</name>